<evidence type="ECO:0000255" key="1">
    <source>
        <dbReference type="HAMAP-Rule" id="MF_01217"/>
    </source>
</evidence>
<evidence type="ECO:0000255" key="2">
    <source>
        <dbReference type="PROSITE-ProRule" id="PRU00258"/>
    </source>
</evidence>
<evidence type="ECO:0007829" key="3">
    <source>
        <dbReference type="PDB" id="7E1S"/>
    </source>
</evidence>
<gene>
    <name evidence="1" type="primary">acpP</name>
    <name type="ordered locus">HPG27_519</name>
</gene>
<feature type="chain" id="PRO_1000139033" description="Acyl carrier protein">
    <location>
        <begin position="1"/>
        <end position="78"/>
    </location>
</feature>
<feature type="domain" description="Carrier" evidence="2">
    <location>
        <begin position="1"/>
        <end position="76"/>
    </location>
</feature>
<feature type="modified residue" description="O-(pantetheine 4'-phosphoryl)serine" evidence="2">
    <location>
        <position position="36"/>
    </location>
</feature>
<feature type="helix" evidence="3">
    <location>
        <begin position="2"/>
        <end position="15"/>
    </location>
</feature>
<feature type="helix" evidence="3">
    <location>
        <begin position="19"/>
        <end position="21"/>
    </location>
</feature>
<feature type="turn" evidence="3">
    <location>
        <begin position="28"/>
        <end position="32"/>
    </location>
</feature>
<feature type="helix" evidence="3">
    <location>
        <begin position="36"/>
        <end position="50"/>
    </location>
</feature>
<feature type="helix" evidence="3">
    <location>
        <begin position="56"/>
        <end position="59"/>
    </location>
</feature>
<feature type="turn" evidence="3">
    <location>
        <begin position="60"/>
        <end position="62"/>
    </location>
</feature>
<feature type="helix" evidence="3">
    <location>
        <begin position="65"/>
        <end position="71"/>
    </location>
</feature>
<proteinExistence type="evidence at protein level"/>
<accession>B5Z6T1</accession>
<sequence length="78" mass="8548">MALFEDIQAVIAEQLNVDAAQVTPEAEFVKDLGADSLDVVELIMALEEKFGVEIPDEQAEKIVNVGDVVKYIEDNKLA</sequence>
<protein>
    <recommendedName>
        <fullName evidence="1">Acyl carrier protein</fullName>
        <shortName evidence="1">ACP</shortName>
    </recommendedName>
</protein>
<name>ACP_HELPG</name>
<keyword id="KW-0002">3D-structure</keyword>
<keyword id="KW-0963">Cytoplasm</keyword>
<keyword id="KW-0275">Fatty acid biosynthesis</keyword>
<keyword id="KW-0276">Fatty acid metabolism</keyword>
<keyword id="KW-0444">Lipid biosynthesis</keyword>
<keyword id="KW-0443">Lipid metabolism</keyword>
<keyword id="KW-0596">Phosphopantetheine</keyword>
<keyword id="KW-0597">Phosphoprotein</keyword>
<keyword id="KW-1185">Reference proteome</keyword>
<reference key="1">
    <citation type="journal article" date="2009" name="J. Bacteriol.">
        <title>The complete genome sequence of Helicobacter pylori strain G27.</title>
        <authorList>
            <person name="Baltrus D.A."/>
            <person name="Amieva M.R."/>
            <person name="Covacci A."/>
            <person name="Lowe T.M."/>
            <person name="Merrell D.S."/>
            <person name="Ottemann K.M."/>
            <person name="Stein M."/>
            <person name="Salama N.R."/>
            <person name="Guillemin K."/>
        </authorList>
    </citation>
    <scope>NUCLEOTIDE SEQUENCE [LARGE SCALE GENOMIC DNA]</scope>
    <source>
        <strain>G27</strain>
    </source>
</reference>
<comment type="function">
    <text evidence="1">Carrier of the growing fatty acid chain in fatty acid biosynthesis.</text>
</comment>
<comment type="pathway">
    <text evidence="1">Lipid metabolism; fatty acid biosynthesis.</text>
</comment>
<comment type="subcellular location">
    <subcellularLocation>
        <location evidence="1">Cytoplasm</location>
    </subcellularLocation>
</comment>
<comment type="PTM">
    <text evidence="1">4'-phosphopantetheine is transferred from CoA to a specific serine of apo-ACP by AcpS. This modification is essential for activity because fatty acids are bound in thioester linkage to the sulfhydryl of the prosthetic group.</text>
</comment>
<comment type="similarity">
    <text evidence="1">Belongs to the acyl carrier protein (ACP) family.</text>
</comment>
<dbReference type="EMBL" id="CP001173">
    <property type="protein sequence ID" value="ACI27280.1"/>
    <property type="molecule type" value="Genomic_DNA"/>
</dbReference>
<dbReference type="RefSeq" id="WP_001163094.1">
    <property type="nucleotide sequence ID" value="NC_011333.1"/>
</dbReference>
<dbReference type="PDB" id="7E1R">
    <property type="method" value="X-ray"/>
    <property type="resolution" value="2.79 A"/>
    <property type="chains" value="B/D=1-78"/>
</dbReference>
<dbReference type="PDB" id="7E1S">
    <property type="method" value="X-ray"/>
    <property type="resolution" value="2.31 A"/>
    <property type="chains" value="B/D=1-78"/>
</dbReference>
<dbReference type="PDBsum" id="7E1R"/>
<dbReference type="PDBsum" id="7E1S"/>
<dbReference type="SMR" id="B5Z6T1"/>
<dbReference type="KEGG" id="hpg:HPG27_519"/>
<dbReference type="HOGENOM" id="CLU_108696_5_1_7"/>
<dbReference type="UniPathway" id="UPA00094"/>
<dbReference type="Proteomes" id="UP000001735">
    <property type="component" value="Chromosome"/>
</dbReference>
<dbReference type="GO" id="GO:0005829">
    <property type="term" value="C:cytosol"/>
    <property type="evidence" value="ECO:0007669"/>
    <property type="project" value="TreeGrafter"/>
</dbReference>
<dbReference type="GO" id="GO:0016020">
    <property type="term" value="C:membrane"/>
    <property type="evidence" value="ECO:0007669"/>
    <property type="project" value="GOC"/>
</dbReference>
<dbReference type="GO" id="GO:0000035">
    <property type="term" value="F:acyl binding"/>
    <property type="evidence" value="ECO:0007669"/>
    <property type="project" value="TreeGrafter"/>
</dbReference>
<dbReference type="GO" id="GO:0000036">
    <property type="term" value="F:acyl carrier activity"/>
    <property type="evidence" value="ECO:0007669"/>
    <property type="project" value="UniProtKB-UniRule"/>
</dbReference>
<dbReference type="GO" id="GO:0031177">
    <property type="term" value="F:phosphopantetheine binding"/>
    <property type="evidence" value="ECO:0007669"/>
    <property type="project" value="InterPro"/>
</dbReference>
<dbReference type="GO" id="GO:0009245">
    <property type="term" value="P:lipid A biosynthetic process"/>
    <property type="evidence" value="ECO:0007669"/>
    <property type="project" value="TreeGrafter"/>
</dbReference>
<dbReference type="FunFam" id="1.10.1200.10:FF:000006">
    <property type="entry name" value="Acyl carrier protein"/>
    <property type="match status" value="1"/>
</dbReference>
<dbReference type="Gene3D" id="1.10.1200.10">
    <property type="entry name" value="ACP-like"/>
    <property type="match status" value="1"/>
</dbReference>
<dbReference type="HAMAP" id="MF_01217">
    <property type="entry name" value="Acyl_carrier"/>
    <property type="match status" value="1"/>
</dbReference>
<dbReference type="InterPro" id="IPR003231">
    <property type="entry name" value="ACP"/>
</dbReference>
<dbReference type="InterPro" id="IPR036736">
    <property type="entry name" value="ACP-like_sf"/>
</dbReference>
<dbReference type="InterPro" id="IPR020806">
    <property type="entry name" value="PKS_PP-bd"/>
</dbReference>
<dbReference type="InterPro" id="IPR009081">
    <property type="entry name" value="PP-bd_ACP"/>
</dbReference>
<dbReference type="InterPro" id="IPR006162">
    <property type="entry name" value="Ppantetheine_attach_site"/>
</dbReference>
<dbReference type="NCBIfam" id="TIGR00517">
    <property type="entry name" value="acyl_carrier"/>
    <property type="match status" value="1"/>
</dbReference>
<dbReference type="NCBIfam" id="NF002148">
    <property type="entry name" value="PRK00982.1-2"/>
    <property type="match status" value="1"/>
</dbReference>
<dbReference type="NCBIfam" id="NF002150">
    <property type="entry name" value="PRK00982.1-4"/>
    <property type="match status" value="1"/>
</dbReference>
<dbReference type="NCBIfam" id="NF002151">
    <property type="entry name" value="PRK00982.1-5"/>
    <property type="match status" value="1"/>
</dbReference>
<dbReference type="PANTHER" id="PTHR20863">
    <property type="entry name" value="ACYL CARRIER PROTEIN"/>
    <property type="match status" value="1"/>
</dbReference>
<dbReference type="PANTHER" id="PTHR20863:SF76">
    <property type="entry name" value="CARRIER DOMAIN-CONTAINING PROTEIN"/>
    <property type="match status" value="1"/>
</dbReference>
<dbReference type="Pfam" id="PF00550">
    <property type="entry name" value="PP-binding"/>
    <property type="match status" value="1"/>
</dbReference>
<dbReference type="SMART" id="SM00823">
    <property type="entry name" value="PKS_PP"/>
    <property type="match status" value="1"/>
</dbReference>
<dbReference type="SUPFAM" id="SSF47336">
    <property type="entry name" value="ACP-like"/>
    <property type="match status" value="1"/>
</dbReference>
<dbReference type="PROSITE" id="PS50075">
    <property type="entry name" value="CARRIER"/>
    <property type="match status" value="1"/>
</dbReference>
<dbReference type="PROSITE" id="PS00012">
    <property type="entry name" value="PHOSPHOPANTETHEINE"/>
    <property type="match status" value="1"/>
</dbReference>
<organism>
    <name type="scientific">Helicobacter pylori (strain G27)</name>
    <dbReference type="NCBI Taxonomy" id="563041"/>
    <lineage>
        <taxon>Bacteria</taxon>
        <taxon>Pseudomonadati</taxon>
        <taxon>Campylobacterota</taxon>
        <taxon>Epsilonproteobacteria</taxon>
        <taxon>Campylobacterales</taxon>
        <taxon>Helicobacteraceae</taxon>
        <taxon>Helicobacter</taxon>
    </lineage>
</organism>